<comment type="function">
    <text evidence="1">Di-iron-containing protein involved in the repair of iron-sulfur clusters damaged by oxidative and nitrosative stress conditions.</text>
</comment>
<comment type="subunit">
    <text evidence="1">Homodimer.</text>
</comment>
<comment type="subcellular location">
    <subcellularLocation>
        <location evidence="1">Cytoplasm</location>
    </subcellularLocation>
</comment>
<comment type="similarity">
    <text evidence="1">Belongs to the RIC family. ScdA subfamily.</text>
</comment>
<sequence>MINKNDIVADIVIDYPKAADIFRSVGIDFCCGGQVSIEAASLEKKNVDLNELLQRLNDVEQTNTPGSLNPKFLNVSSLIQYIQAAYHEPLREEFKNLTPYVTKLSKVHGPNHPYLVELKETYDTFKSGMLEHMQKEDDVDFPKLIKYEQGEVVNDINTVIDDLVSDHIATGQLLVKMSDLTSSYEPPIEACGTWRLVYQRLKALEVLTHEHVHLENHVLFKKVS</sequence>
<feature type="chain" id="PRO_1000085349" description="Iron-sulfur cluster repair protein ScdA">
    <location>
        <begin position="1"/>
        <end position="224"/>
    </location>
</feature>
<keyword id="KW-0963">Cytoplasm</keyword>
<keyword id="KW-0408">Iron</keyword>
<keyword id="KW-0479">Metal-binding</keyword>
<keyword id="KW-0346">Stress response</keyword>
<gene>
    <name evidence="1" type="primary">scdA</name>
    <name type="ordered locus">SaurJH1_0250</name>
</gene>
<name>SCDA_STAA2</name>
<protein>
    <recommendedName>
        <fullName evidence="1">Iron-sulfur cluster repair protein ScdA</fullName>
    </recommendedName>
</protein>
<evidence type="ECO:0000255" key="1">
    <source>
        <dbReference type="HAMAP-Rule" id="MF_01156"/>
    </source>
</evidence>
<proteinExistence type="inferred from homology"/>
<reference key="1">
    <citation type="submission" date="2007-06" db="EMBL/GenBank/DDBJ databases">
        <title>Complete sequence of chromosome of Staphylococcus aureus subsp. aureus JH1.</title>
        <authorList>
            <consortium name="US DOE Joint Genome Institute"/>
            <person name="Copeland A."/>
            <person name="Lucas S."/>
            <person name="Lapidus A."/>
            <person name="Barry K."/>
            <person name="Detter J.C."/>
            <person name="Glavina del Rio T."/>
            <person name="Hammon N."/>
            <person name="Israni S."/>
            <person name="Dalin E."/>
            <person name="Tice H."/>
            <person name="Pitluck S."/>
            <person name="Chain P."/>
            <person name="Malfatti S."/>
            <person name="Shin M."/>
            <person name="Vergez L."/>
            <person name="Schmutz J."/>
            <person name="Larimer F."/>
            <person name="Land M."/>
            <person name="Hauser L."/>
            <person name="Kyrpides N."/>
            <person name="Ivanova N."/>
            <person name="Tomasz A."/>
            <person name="Richardson P."/>
        </authorList>
    </citation>
    <scope>NUCLEOTIDE SEQUENCE [LARGE SCALE GENOMIC DNA]</scope>
    <source>
        <strain>JH1</strain>
    </source>
</reference>
<dbReference type="EMBL" id="CP000736">
    <property type="protein sequence ID" value="ABR51112.1"/>
    <property type="molecule type" value="Genomic_DNA"/>
</dbReference>
<dbReference type="SMR" id="A6TY44"/>
<dbReference type="KEGG" id="sah:SaurJH1_0250"/>
<dbReference type="HOGENOM" id="CLU_076075_0_1_9"/>
<dbReference type="GO" id="GO:0005737">
    <property type="term" value="C:cytoplasm"/>
    <property type="evidence" value="ECO:0007669"/>
    <property type="project" value="UniProtKB-SubCell"/>
</dbReference>
<dbReference type="GO" id="GO:0046872">
    <property type="term" value="F:metal ion binding"/>
    <property type="evidence" value="ECO:0007669"/>
    <property type="project" value="UniProtKB-KW"/>
</dbReference>
<dbReference type="GO" id="GO:0030091">
    <property type="term" value="P:protein repair"/>
    <property type="evidence" value="ECO:0007669"/>
    <property type="project" value="UniProtKB-UniRule"/>
</dbReference>
<dbReference type="GO" id="GO:0051409">
    <property type="term" value="P:response to nitrosative stress"/>
    <property type="evidence" value="ECO:0007669"/>
    <property type="project" value="UniProtKB-UniRule"/>
</dbReference>
<dbReference type="GO" id="GO:0006979">
    <property type="term" value="P:response to oxidative stress"/>
    <property type="evidence" value="ECO:0007669"/>
    <property type="project" value="UniProtKB-UniRule"/>
</dbReference>
<dbReference type="FunFam" id="1.20.120.520:FF:000003">
    <property type="entry name" value="Iron-sulfur cluster repair protein ScdA"/>
    <property type="match status" value="1"/>
</dbReference>
<dbReference type="Gene3D" id="1.20.120.520">
    <property type="entry name" value="nmb1532 protein domain like"/>
    <property type="match status" value="1"/>
</dbReference>
<dbReference type="Gene3D" id="1.10.3910.10">
    <property type="entry name" value="SP0561-like"/>
    <property type="match status" value="1"/>
</dbReference>
<dbReference type="HAMAP" id="MF_01156">
    <property type="entry name" value="RIC_ScdA"/>
    <property type="match status" value="1"/>
</dbReference>
<dbReference type="InterPro" id="IPR012312">
    <property type="entry name" value="Hemerythrin-like"/>
</dbReference>
<dbReference type="InterPro" id="IPR019903">
    <property type="entry name" value="RIC_family"/>
</dbReference>
<dbReference type="InterPro" id="IPR023551">
    <property type="entry name" value="ScdA"/>
</dbReference>
<dbReference type="InterPro" id="IPR038062">
    <property type="entry name" value="ScdA-like_N_sf"/>
</dbReference>
<dbReference type="NCBIfam" id="TIGR03652">
    <property type="entry name" value="FeS_repair_RIC"/>
    <property type="match status" value="1"/>
</dbReference>
<dbReference type="NCBIfam" id="NF009777">
    <property type="entry name" value="PRK13276.1"/>
    <property type="match status" value="1"/>
</dbReference>
<dbReference type="PANTHER" id="PTHR36438">
    <property type="entry name" value="IRON-SULFUR CLUSTER REPAIR PROTEIN YTFE"/>
    <property type="match status" value="1"/>
</dbReference>
<dbReference type="PANTHER" id="PTHR36438:SF1">
    <property type="entry name" value="IRON-SULFUR CLUSTER REPAIR PROTEIN YTFE"/>
    <property type="match status" value="1"/>
</dbReference>
<dbReference type="Pfam" id="PF01814">
    <property type="entry name" value="Hemerythrin"/>
    <property type="match status" value="1"/>
</dbReference>
<dbReference type="Pfam" id="PF04405">
    <property type="entry name" value="ScdA_N"/>
    <property type="match status" value="1"/>
</dbReference>
<dbReference type="SUPFAM" id="SSF140683">
    <property type="entry name" value="SP0561-like"/>
    <property type="match status" value="1"/>
</dbReference>
<accession>A6TY44</accession>
<organism>
    <name type="scientific">Staphylococcus aureus (strain JH1)</name>
    <dbReference type="NCBI Taxonomy" id="359787"/>
    <lineage>
        <taxon>Bacteria</taxon>
        <taxon>Bacillati</taxon>
        <taxon>Bacillota</taxon>
        <taxon>Bacilli</taxon>
        <taxon>Bacillales</taxon>
        <taxon>Staphylococcaceae</taxon>
        <taxon>Staphylococcus</taxon>
    </lineage>
</organism>